<protein>
    <recommendedName>
        <fullName evidence="1">Deoxyuridine 5'-triphosphate nucleotidohydrolase</fullName>
        <shortName evidence="1">dUTPase</shortName>
        <ecNumber evidence="1">3.6.1.23</ecNumber>
    </recommendedName>
    <alternativeName>
        <fullName evidence="1">dUTP pyrophosphatase</fullName>
    </alternativeName>
</protein>
<organism>
    <name type="scientific">Phocaeicola vulgatus (strain ATCC 8482 / DSM 1447 / JCM 5826 / CCUG 4940 / NBRC 14291 / NCTC 11154)</name>
    <name type="common">Bacteroides vulgatus</name>
    <dbReference type="NCBI Taxonomy" id="435590"/>
    <lineage>
        <taxon>Bacteria</taxon>
        <taxon>Pseudomonadati</taxon>
        <taxon>Bacteroidota</taxon>
        <taxon>Bacteroidia</taxon>
        <taxon>Bacteroidales</taxon>
        <taxon>Bacteroidaceae</taxon>
        <taxon>Phocaeicola</taxon>
    </lineage>
</organism>
<name>DUT_PHOV8</name>
<reference key="1">
    <citation type="journal article" date="2007" name="PLoS Biol.">
        <title>Evolution of symbiotic bacteria in the distal human intestine.</title>
        <authorList>
            <person name="Xu J."/>
            <person name="Mahowald M.A."/>
            <person name="Ley R.E."/>
            <person name="Lozupone C.A."/>
            <person name="Hamady M."/>
            <person name="Martens E.C."/>
            <person name="Henrissat B."/>
            <person name="Coutinho P.M."/>
            <person name="Minx P."/>
            <person name="Latreille P."/>
            <person name="Cordum H."/>
            <person name="Van Brunt A."/>
            <person name="Kim K."/>
            <person name="Fulton R.S."/>
            <person name="Fulton L.A."/>
            <person name="Clifton S.W."/>
            <person name="Wilson R.K."/>
            <person name="Knight R.D."/>
            <person name="Gordon J.I."/>
        </authorList>
    </citation>
    <scope>NUCLEOTIDE SEQUENCE [LARGE SCALE GENOMIC DNA]</scope>
    <source>
        <strain>ATCC 8482 / DSM 1447 / JCM 5826 / CCUG 4940 / NBRC 14291 / NCTC 11154</strain>
    </source>
</reference>
<accession>A6L083</accession>
<proteinExistence type="inferred from homology"/>
<keyword id="KW-0378">Hydrolase</keyword>
<keyword id="KW-0460">Magnesium</keyword>
<keyword id="KW-0479">Metal-binding</keyword>
<keyword id="KW-0546">Nucleotide metabolism</keyword>
<feature type="chain" id="PRO_1000015444" description="Deoxyuridine 5'-triphosphate nucleotidohydrolase">
    <location>
        <begin position="1"/>
        <end position="144"/>
    </location>
</feature>
<feature type="binding site" evidence="1">
    <location>
        <begin position="63"/>
        <end position="65"/>
    </location>
    <ligand>
        <name>substrate</name>
    </ligand>
</feature>
<feature type="binding site" evidence="1">
    <location>
        <position position="76"/>
    </location>
    <ligand>
        <name>substrate</name>
    </ligand>
</feature>
<feature type="binding site" evidence="1">
    <location>
        <begin position="80"/>
        <end position="82"/>
    </location>
    <ligand>
        <name>substrate</name>
    </ligand>
</feature>
<dbReference type="EC" id="3.6.1.23" evidence="1"/>
<dbReference type="EMBL" id="CP000139">
    <property type="protein sequence ID" value="ABR39097.1"/>
    <property type="molecule type" value="Genomic_DNA"/>
</dbReference>
<dbReference type="RefSeq" id="WP_005845350.1">
    <property type="nucleotide sequence ID" value="NZ_JANSWM010000067.1"/>
</dbReference>
<dbReference type="SMR" id="A6L083"/>
<dbReference type="STRING" id="435590.BVU_1409"/>
<dbReference type="PaxDb" id="435590-BVU_1409"/>
<dbReference type="GeneID" id="93445292"/>
<dbReference type="KEGG" id="bvu:BVU_1409"/>
<dbReference type="eggNOG" id="COG0756">
    <property type="taxonomic scope" value="Bacteria"/>
</dbReference>
<dbReference type="HOGENOM" id="CLU_068508_1_2_10"/>
<dbReference type="BioCyc" id="BVUL435590:G1G59-1473-MONOMER"/>
<dbReference type="UniPathway" id="UPA00610">
    <property type="reaction ID" value="UER00666"/>
</dbReference>
<dbReference type="Proteomes" id="UP000002861">
    <property type="component" value="Chromosome"/>
</dbReference>
<dbReference type="GO" id="GO:0004170">
    <property type="term" value="F:dUTP diphosphatase activity"/>
    <property type="evidence" value="ECO:0007669"/>
    <property type="project" value="UniProtKB-UniRule"/>
</dbReference>
<dbReference type="GO" id="GO:0000287">
    <property type="term" value="F:magnesium ion binding"/>
    <property type="evidence" value="ECO:0007669"/>
    <property type="project" value="UniProtKB-UniRule"/>
</dbReference>
<dbReference type="GO" id="GO:0006226">
    <property type="term" value="P:dUMP biosynthetic process"/>
    <property type="evidence" value="ECO:0007669"/>
    <property type="project" value="UniProtKB-UniRule"/>
</dbReference>
<dbReference type="GO" id="GO:0046081">
    <property type="term" value="P:dUTP catabolic process"/>
    <property type="evidence" value="ECO:0007669"/>
    <property type="project" value="InterPro"/>
</dbReference>
<dbReference type="CDD" id="cd07557">
    <property type="entry name" value="trimeric_dUTPase"/>
    <property type="match status" value="1"/>
</dbReference>
<dbReference type="FunFam" id="2.70.40.10:FF:000002">
    <property type="entry name" value="dUTP diphosphatase"/>
    <property type="match status" value="1"/>
</dbReference>
<dbReference type="Gene3D" id="2.70.40.10">
    <property type="match status" value="1"/>
</dbReference>
<dbReference type="HAMAP" id="MF_00116">
    <property type="entry name" value="dUTPase_bact"/>
    <property type="match status" value="1"/>
</dbReference>
<dbReference type="InterPro" id="IPR008181">
    <property type="entry name" value="dUTPase"/>
</dbReference>
<dbReference type="InterPro" id="IPR029054">
    <property type="entry name" value="dUTPase-like"/>
</dbReference>
<dbReference type="InterPro" id="IPR036157">
    <property type="entry name" value="dUTPase-like_sf"/>
</dbReference>
<dbReference type="InterPro" id="IPR033704">
    <property type="entry name" value="dUTPase_trimeric"/>
</dbReference>
<dbReference type="NCBIfam" id="TIGR00576">
    <property type="entry name" value="dut"/>
    <property type="match status" value="1"/>
</dbReference>
<dbReference type="NCBIfam" id="NF001862">
    <property type="entry name" value="PRK00601.1"/>
    <property type="match status" value="1"/>
</dbReference>
<dbReference type="PANTHER" id="PTHR11241">
    <property type="entry name" value="DEOXYURIDINE 5'-TRIPHOSPHATE NUCLEOTIDOHYDROLASE"/>
    <property type="match status" value="1"/>
</dbReference>
<dbReference type="PANTHER" id="PTHR11241:SF0">
    <property type="entry name" value="DEOXYURIDINE 5'-TRIPHOSPHATE NUCLEOTIDOHYDROLASE"/>
    <property type="match status" value="1"/>
</dbReference>
<dbReference type="Pfam" id="PF00692">
    <property type="entry name" value="dUTPase"/>
    <property type="match status" value="1"/>
</dbReference>
<dbReference type="SUPFAM" id="SSF51283">
    <property type="entry name" value="dUTPase-like"/>
    <property type="match status" value="1"/>
</dbReference>
<evidence type="ECO:0000255" key="1">
    <source>
        <dbReference type="HAMAP-Rule" id="MF_00116"/>
    </source>
</evidence>
<sequence length="144" mass="15779">MKIQVINKSKHALPEYATGQSAGMDIRANLDEPIVLKPLQRCLVPTGLYIALPEGFEAQIRPRSGLAIKKGIGVLNSPGTIDADYRGEICIILVNLSSEDFMIEDGERIAQMVVARHEHAEWQEVEVLDETERGAGGFGHTGKK</sequence>
<comment type="function">
    <text evidence="1">This enzyme is involved in nucleotide metabolism: it produces dUMP, the immediate precursor of thymidine nucleotides and it decreases the intracellular concentration of dUTP so that uracil cannot be incorporated into DNA.</text>
</comment>
<comment type="catalytic activity">
    <reaction evidence="1">
        <text>dUTP + H2O = dUMP + diphosphate + H(+)</text>
        <dbReference type="Rhea" id="RHEA:10248"/>
        <dbReference type="ChEBI" id="CHEBI:15377"/>
        <dbReference type="ChEBI" id="CHEBI:15378"/>
        <dbReference type="ChEBI" id="CHEBI:33019"/>
        <dbReference type="ChEBI" id="CHEBI:61555"/>
        <dbReference type="ChEBI" id="CHEBI:246422"/>
        <dbReference type="EC" id="3.6.1.23"/>
    </reaction>
</comment>
<comment type="cofactor">
    <cofactor evidence="1">
        <name>Mg(2+)</name>
        <dbReference type="ChEBI" id="CHEBI:18420"/>
    </cofactor>
</comment>
<comment type="pathway">
    <text evidence="1">Pyrimidine metabolism; dUMP biosynthesis; dUMP from dCTP (dUTP route): step 2/2.</text>
</comment>
<comment type="similarity">
    <text evidence="1">Belongs to the dUTPase family.</text>
</comment>
<gene>
    <name evidence="1" type="primary">dut</name>
    <name type="ordered locus">BVU_1409</name>
</gene>